<sequence>MELRSGNSMVVAPKSKGIIDPNTGKLIGSDDRFFHDINAELSDKGFLVTSADALITWARTGSLMWMSFGLACCAIEMMQCSMPHYDNERFGYAPRASPRQSDVMVVAGTLTNKMAPALRKVYDQMPEPRYVISMGSCANGGGYYHYSYSVVRGCDRIVPVDIYVPGCPPTAEALLYGILLLQKKIRRTGSIER</sequence>
<dbReference type="EC" id="7.1.1.-" evidence="1"/>
<dbReference type="EMBL" id="BX897700">
    <property type="protein sequence ID" value="CAF26057.1"/>
    <property type="molecule type" value="Genomic_DNA"/>
</dbReference>
<dbReference type="RefSeq" id="WP_011179327.1">
    <property type="nucleotide sequence ID" value="NC_005955.1"/>
</dbReference>
<dbReference type="SMR" id="Q6FZZ0"/>
<dbReference type="KEGG" id="bqu:BQ05650"/>
<dbReference type="eggNOG" id="COG0377">
    <property type="taxonomic scope" value="Bacteria"/>
</dbReference>
<dbReference type="HOGENOM" id="CLU_055737_7_0_5"/>
<dbReference type="OrthoDB" id="9786737at2"/>
<dbReference type="Proteomes" id="UP000000597">
    <property type="component" value="Chromosome"/>
</dbReference>
<dbReference type="GO" id="GO:0005886">
    <property type="term" value="C:plasma membrane"/>
    <property type="evidence" value="ECO:0007669"/>
    <property type="project" value="UniProtKB-SubCell"/>
</dbReference>
<dbReference type="GO" id="GO:0045271">
    <property type="term" value="C:respiratory chain complex I"/>
    <property type="evidence" value="ECO:0007669"/>
    <property type="project" value="TreeGrafter"/>
</dbReference>
<dbReference type="GO" id="GO:0051539">
    <property type="term" value="F:4 iron, 4 sulfur cluster binding"/>
    <property type="evidence" value="ECO:0007669"/>
    <property type="project" value="UniProtKB-KW"/>
</dbReference>
<dbReference type="GO" id="GO:0005506">
    <property type="term" value="F:iron ion binding"/>
    <property type="evidence" value="ECO:0007669"/>
    <property type="project" value="UniProtKB-UniRule"/>
</dbReference>
<dbReference type="GO" id="GO:0008137">
    <property type="term" value="F:NADH dehydrogenase (ubiquinone) activity"/>
    <property type="evidence" value="ECO:0007669"/>
    <property type="project" value="InterPro"/>
</dbReference>
<dbReference type="GO" id="GO:0050136">
    <property type="term" value="F:NADH:ubiquinone reductase (non-electrogenic) activity"/>
    <property type="evidence" value="ECO:0007669"/>
    <property type="project" value="UniProtKB-UniRule"/>
</dbReference>
<dbReference type="GO" id="GO:0048038">
    <property type="term" value="F:quinone binding"/>
    <property type="evidence" value="ECO:0007669"/>
    <property type="project" value="UniProtKB-KW"/>
</dbReference>
<dbReference type="GO" id="GO:0009060">
    <property type="term" value="P:aerobic respiration"/>
    <property type="evidence" value="ECO:0007669"/>
    <property type="project" value="TreeGrafter"/>
</dbReference>
<dbReference type="GO" id="GO:0015990">
    <property type="term" value="P:electron transport coupled proton transport"/>
    <property type="evidence" value="ECO:0007669"/>
    <property type="project" value="TreeGrafter"/>
</dbReference>
<dbReference type="FunFam" id="3.40.50.12280:FF:000001">
    <property type="entry name" value="NADH-quinone oxidoreductase subunit B 2"/>
    <property type="match status" value="1"/>
</dbReference>
<dbReference type="Gene3D" id="3.40.50.12280">
    <property type="match status" value="1"/>
</dbReference>
<dbReference type="HAMAP" id="MF_01356">
    <property type="entry name" value="NDH1_NuoB"/>
    <property type="match status" value="1"/>
</dbReference>
<dbReference type="InterPro" id="IPR006137">
    <property type="entry name" value="NADH_UbQ_OxRdtase-like_20kDa"/>
</dbReference>
<dbReference type="InterPro" id="IPR006138">
    <property type="entry name" value="NADH_UQ_OxRdtase_20Kd_su"/>
</dbReference>
<dbReference type="NCBIfam" id="TIGR01957">
    <property type="entry name" value="nuoB_fam"/>
    <property type="match status" value="1"/>
</dbReference>
<dbReference type="NCBIfam" id="NF005012">
    <property type="entry name" value="PRK06411.1"/>
    <property type="match status" value="1"/>
</dbReference>
<dbReference type="PANTHER" id="PTHR11995">
    <property type="entry name" value="NADH DEHYDROGENASE"/>
    <property type="match status" value="1"/>
</dbReference>
<dbReference type="PANTHER" id="PTHR11995:SF14">
    <property type="entry name" value="NADH DEHYDROGENASE [UBIQUINONE] IRON-SULFUR PROTEIN 7, MITOCHONDRIAL"/>
    <property type="match status" value="1"/>
</dbReference>
<dbReference type="Pfam" id="PF01058">
    <property type="entry name" value="Oxidored_q6"/>
    <property type="match status" value="1"/>
</dbReference>
<dbReference type="SUPFAM" id="SSF56770">
    <property type="entry name" value="HydA/Nqo6-like"/>
    <property type="match status" value="1"/>
</dbReference>
<dbReference type="PROSITE" id="PS01150">
    <property type="entry name" value="COMPLEX1_20K"/>
    <property type="match status" value="1"/>
</dbReference>
<evidence type="ECO:0000255" key="1">
    <source>
        <dbReference type="HAMAP-Rule" id="MF_01356"/>
    </source>
</evidence>
<feature type="chain" id="PRO_0000376146" description="NADH-quinone oxidoreductase subunit B">
    <location>
        <begin position="1"/>
        <end position="193"/>
    </location>
</feature>
<feature type="binding site" evidence="1">
    <location>
        <position position="72"/>
    </location>
    <ligand>
        <name>[4Fe-4S] cluster</name>
        <dbReference type="ChEBI" id="CHEBI:49883"/>
    </ligand>
</feature>
<feature type="binding site" evidence="1">
    <location>
        <position position="73"/>
    </location>
    <ligand>
        <name>[4Fe-4S] cluster</name>
        <dbReference type="ChEBI" id="CHEBI:49883"/>
    </ligand>
</feature>
<feature type="binding site" evidence="1">
    <location>
        <position position="137"/>
    </location>
    <ligand>
        <name>[4Fe-4S] cluster</name>
        <dbReference type="ChEBI" id="CHEBI:49883"/>
    </ligand>
</feature>
<feature type="binding site" evidence="1">
    <location>
        <position position="167"/>
    </location>
    <ligand>
        <name>[4Fe-4S] cluster</name>
        <dbReference type="ChEBI" id="CHEBI:49883"/>
    </ligand>
</feature>
<organism>
    <name type="scientific">Bartonella quintana (strain Toulouse)</name>
    <name type="common">Rochalimaea quintana</name>
    <dbReference type="NCBI Taxonomy" id="283165"/>
    <lineage>
        <taxon>Bacteria</taxon>
        <taxon>Pseudomonadati</taxon>
        <taxon>Pseudomonadota</taxon>
        <taxon>Alphaproteobacteria</taxon>
        <taxon>Hyphomicrobiales</taxon>
        <taxon>Bartonellaceae</taxon>
        <taxon>Bartonella</taxon>
    </lineage>
</organism>
<keyword id="KW-0004">4Fe-4S</keyword>
<keyword id="KW-0997">Cell inner membrane</keyword>
<keyword id="KW-1003">Cell membrane</keyword>
<keyword id="KW-0408">Iron</keyword>
<keyword id="KW-0411">Iron-sulfur</keyword>
<keyword id="KW-0472">Membrane</keyword>
<keyword id="KW-0479">Metal-binding</keyword>
<keyword id="KW-0520">NAD</keyword>
<keyword id="KW-0874">Quinone</keyword>
<keyword id="KW-1278">Translocase</keyword>
<keyword id="KW-0813">Transport</keyword>
<keyword id="KW-0830">Ubiquinone</keyword>
<accession>Q6FZZ0</accession>
<name>NUOB_BARQU</name>
<protein>
    <recommendedName>
        <fullName evidence="1">NADH-quinone oxidoreductase subunit B</fullName>
        <ecNumber evidence="1">7.1.1.-</ecNumber>
    </recommendedName>
    <alternativeName>
        <fullName evidence="1">NADH dehydrogenase I subunit B</fullName>
    </alternativeName>
    <alternativeName>
        <fullName evidence="1">NDH-1 subunit B</fullName>
    </alternativeName>
</protein>
<gene>
    <name evidence="1" type="primary">nuoB</name>
    <name type="ordered locus">BQ05650</name>
</gene>
<comment type="function">
    <text evidence="1">NDH-1 shuttles electrons from NADH, via FMN and iron-sulfur (Fe-S) centers, to quinones in the respiratory chain. The immediate electron acceptor for the enzyme in this species is believed to be ubiquinone. Couples the redox reaction to proton translocation (for every two electrons transferred, four hydrogen ions are translocated across the cytoplasmic membrane), and thus conserves the redox energy in a proton gradient.</text>
</comment>
<comment type="catalytic activity">
    <reaction evidence="1">
        <text>a quinone + NADH + 5 H(+)(in) = a quinol + NAD(+) + 4 H(+)(out)</text>
        <dbReference type="Rhea" id="RHEA:57888"/>
        <dbReference type="ChEBI" id="CHEBI:15378"/>
        <dbReference type="ChEBI" id="CHEBI:24646"/>
        <dbReference type="ChEBI" id="CHEBI:57540"/>
        <dbReference type="ChEBI" id="CHEBI:57945"/>
        <dbReference type="ChEBI" id="CHEBI:132124"/>
    </reaction>
</comment>
<comment type="cofactor">
    <cofactor evidence="1">
        <name>[4Fe-4S] cluster</name>
        <dbReference type="ChEBI" id="CHEBI:49883"/>
    </cofactor>
    <text evidence="1">Binds 1 [4Fe-4S] cluster.</text>
</comment>
<comment type="subunit">
    <text evidence="1">NDH-1 is composed of 14 different subunits. Subunits NuoB, C, D, E, F, and G constitute the peripheral sector of the complex.</text>
</comment>
<comment type="subcellular location">
    <subcellularLocation>
        <location evidence="1">Cell inner membrane</location>
        <topology evidence="1">Peripheral membrane protein</topology>
        <orientation evidence="1">Cytoplasmic side</orientation>
    </subcellularLocation>
</comment>
<comment type="similarity">
    <text evidence="1">Belongs to the complex I 20 kDa subunit family.</text>
</comment>
<reference key="1">
    <citation type="journal article" date="2004" name="Proc. Natl. Acad. Sci. U.S.A.">
        <title>The louse-borne human pathogen Bartonella quintana is a genomic derivative of the zoonotic agent Bartonella henselae.</title>
        <authorList>
            <person name="Alsmark U.C.M."/>
            <person name="Frank A.C."/>
            <person name="Karlberg E.O."/>
            <person name="Legault B.-A."/>
            <person name="Ardell D.H."/>
            <person name="Canbaeck B."/>
            <person name="Eriksson A.-S."/>
            <person name="Naeslund A.K."/>
            <person name="Handley S.A."/>
            <person name="Huvet M."/>
            <person name="La Scola B."/>
            <person name="Holmberg M."/>
            <person name="Andersson S.G.E."/>
        </authorList>
    </citation>
    <scope>NUCLEOTIDE SEQUENCE [LARGE SCALE GENOMIC DNA]</scope>
    <source>
        <strain>Toulouse</strain>
    </source>
</reference>
<proteinExistence type="inferred from homology"/>